<name>S12A5_MOUSE</name>
<reference key="1">
    <citation type="journal article" date="2001" name="Mamm. Genome">
        <title>High-throughput sequence identification of gene coding variants within alcohol-related QTLs.</title>
        <authorList>
            <person name="Ehringer M.A."/>
            <person name="Thompson J."/>
            <person name="Conroy O."/>
            <person name="Xu Y."/>
            <person name="Yang F."/>
            <person name="Canniff J."/>
            <person name="Beeson M."/>
            <person name="Gordon L."/>
            <person name="Bennett B."/>
            <person name="Johnson T.E."/>
            <person name="Sikela J.M."/>
        </authorList>
    </citation>
    <scope>NUCLEOTIDE SEQUENCE [MRNA] (ISOFORM 2)</scope>
    <source>
        <strain>ILS</strain>
        <strain>ISS</strain>
    </source>
</reference>
<reference key="2">
    <citation type="journal article" date="2003" name="DNA Res.">
        <title>Prediction of the coding sequences of mouse homologues of KIAA gene: II. The complete nucleotide sequences of 400 mouse KIAA-homologous cDNAs identified by screening of terminal sequences of cDNA clones randomly sampled from size-fractionated libraries.</title>
        <authorList>
            <person name="Okazaki N."/>
            <person name="Kikuno R."/>
            <person name="Ohara R."/>
            <person name="Inamoto S."/>
            <person name="Aizawa H."/>
            <person name="Yuasa S."/>
            <person name="Nakajima D."/>
            <person name="Nagase T."/>
            <person name="Ohara O."/>
            <person name="Koga H."/>
        </authorList>
    </citation>
    <scope>NUCLEOTIDE SEQUENCE [LARGE SCALE MRNA] (ISOFORM 2)</scope>
    <source>
        <tissue>Brain</tissue>
    </source>
</reference>
<reference key="3">
    <citation type="journal article" date="2005" name="Science">
        <title>The transcriptional landscape of the mammalian genome.</title>
        <authorList>
            <person name="Carninci P."/>
            <person name="Kasukawa T."/>
            <person name="Katayama S."/>
            <person name="Gough J."/>
            <person name="Frith M.C."/>
            <person name="Maeda N."/>
            <person name="Oyama R."/>
            <person name="Ravasi T."/>
            <person name="Lenhard B."/>
            <person name="Wells C."/>
            <person name="Kodzius R."/>
            <person name="Shimokawa K."/>
            <person name="Bajic V.B."/>
            <person name="Brenner S.E."/>
            <person name="Batalov S."/>
            <person name="Forrest A.R."/>
            <person name="Zavolan M."/>
            <person name="Davis M.J."/>
            <person name="Wilming L.G."/>
            <person name="Aidinis V."/>
            <person name="Allen J.E."/>
            <person name="Ambesi-Impiombato A."/>
            <person name="Apweiler R."/>
            <person name="Aturaliya R.N."/>
            <person name="Bailey T.L."/>
            <person name="Bansal M."/>
            <person name="Baxter L."/>
            <person name="Beisel K.W."/>
            <person name="Bersano T."/>
            <person name="Bono H."/>
            <person name="Chalk A.M."/>
            <person name="Chiu K.P."/>
            <person name="Choudhary V."/>
            <person name="Christoffels A."/>
            <person name="Clutterbuck D.R."/>
            <person name="Crowe M.L."/>
            <person name="Dalla E."/>
            <person name="Dalrymple B.P."/>
            <person name="de Bono B."/>
            <person name="Della Gatta G."/>
            <person name="di Bernardo D."/>
            <person name="Down T."/>
            <person name="Engstrom P."/>
            <person name="Fagiolini M."/>
            <person name="Faulkner G."/>
            <person name="Fletcher C.F."/>
            <person name="Fukushima T."/>
            <person name="Furuno M."/>
            <person name="Futaki S."/>
            <person name="Gariboldi M."/>
            <person name="Georgii-Hemming P."/>
            <person name="Gingeras T.R."/>
            <person name="Gojobori T."/>
            <person name="Green R.E."/>
            <person name="Gustincich S."/>
            <person name="Harbers M."/>
            <person name="Hayashi Y."/>
            <person name="Hensch T.K."/>
            <person name="Hirokawa N."/>
            <person name="Hill D."/>
            <person name="Huminiecki L."/>
            <person name="Iacono M."/>
            <person name="Ikeo K."/>
            <person name="Iwama A."/>
            <person name="Ishikawa T."/>
            <person name="Jakt M."/>
            <person name="Kanapin A."/>
            <person name="Katoh M."/>
            <person name="Kawasawa Y."/>
            <person name="Kelso J."/>
            <person name="Kitamura H."/>
            <person name="Kitano H."/>
            <person name="Kollias G."/>
            <person name="Krishnan S.P."/>
            <person name="Kruger A."/>
            <person name="Kummerfeld S.K."/>
            <person name="Kurochkin I.V."/>
            <person name="Lareau L.F."/>
            <person name="Lazarevic D."/>
            <person name="Lipovich L."/>
            <person name="Liu J."/>
            <person name="Liuni S."/>
            <person name="McWilliam S."/>
            <person name="Madan Babu M."/>
            <person name="Madera M."/>
            <person name="Marchionni L."/>
            <person name="Matsuda H."/>
            <person name="Matsuzawa S."/>
            <person name="Miki H."/>
            <person name="Mignone F."/>
            <person name="Miyake S."/>
            <person name="Morris K."/>
            <person name="Mottagui-Tabar S."/>
            <person name="Mulder N."/>
            <person name="Nakano N."/>
            <person name="Nakauchi H."/>
            <person name="Ng P."/>
            <person name="Nilsson R."/>
            <person name="Nishiguchi S."/>
            <person name="Nishikawa S."/>
            <person name="Nori F."/>
            <person name="Ohara O."/>
            <person name="Okazaki Y."/>
            <person name="Orlando V."/>
            <person name="Pang K.C."/>
            <person name="Pavan W.J."/>
            <person name="Pavesi G."/>
            <person name="Pesole G."/>
            <person name="Petrovsky N."/>
            <person name="Piazza S."/>
            <person name="Reed J."/>
            <person name="Reid J.F."/>
            <person name="Ring B.Z."/>
            <person name="Ringwald M."/>
            <person name="Rost B."/>
            <person name="Ruan Y."/>
            <person name="Salzberg S.L."/>
            <person name="Sandelin A."/>
            <person name="Schneider C."/>
            <person name="Schoenbach C."/>
            <person name="Sekiguchi K."/>
            <person name="Semple C.A."/>
            <person name="Seno S."/>
            <person name="Sessa L."/>
            <person name="Sheng Y."/>
            <person name="Shibata Y."/>
            <person name="Shimada H."/>
            <person name="Shimada K."/>
            <person name="Silva D."/>
            <person name="Sinclair B."/>
            <person name="Sperling S."/>
            <person name="Stupka E."/>
            <person name="Sugiura K."/>
            <person name="Sultana R."/>
            <person name="Takenaka Y."/>
            <person name="Taki K."/>
            <person name="Tammoja K."/>
            <person name="Tan S.L."/>
            <person name="Tang S."/>
            <person name="Taylor M.S."/>
            <person name="Tegner J."/>
            <person name="Teichmann S.A."/>
            <person name="Ueda H.R."/>
            <person name="van Nimwegen E."/>
            <person name="Verardo R."/>
            <person name="Wei C.L."/>
            <person name="Yagi K."/>
            <person name="Yamanishi H."/>
            <person name="Zabarovsky E."/>
            <person name="Zhu S."/>
            <person name="Zimmer A."/>
            <person name="Hide W."/>
            <person name="Bult C."/>
            <person name="Grimmond S.M."/>
            <person name="Teasdale R.D."/>
            <person name="Liu E.T."/>
            <person name="Brusic V."/>
            <person name="Quackenbush J."/>
            <person name="Wahlestedt C."/>
            <person name="Mattick J.S."/>
            <person name="Hume D.A."/>
            <person name="Kai C."/>
            <person name="Sasaki D."/>
            <person name="Tomaru Y."/>
            <person name="Fukuda S."/>
            <person name="Kanamori-Katayama M."/>
            <person name="Suzuki M."/>
            <person name="Aoki J."/>
            <person name="Arakawa T."/>
            <person name="Iida J."/>
            <person name="Imamura K."/>
            <person name="Itoh M."/>
            <person name="Kato T."/>
            <person name="Kawaji H."/>
            <person name="Kawagashira N."/>
            <person name="Kawashima T."/>
            <person name="Kojima M."/>
            <person name="Kondo S."/>
            <person name="Konno H."/>
            <person name="Nakano K."/>
            <person name="Ninomiya N."/>
            <person name="Nishio T."/>
            <person name="Okada M."/>
            <person name="Plessy C."/>
            <person name="Shibata K."/>
            <person name="Shiraki T."/>
            <person name="Suzuki S."/>
            <person name="Tagami M."/>
            <person name="Waki K."/>
            <person name="Watahiki A."/>
            <person name="Okamura-Oho Y."/>
            <person name="Suzuki H."/>
            <person name="Kawai J."/>
            <person name="Hayashizaki Y."/>
        </authorList>
    </citation>
    <scope>NUCLEOTIDE SEQUENCE [LARGE SCALE MRNA] (ISOFORM 2)</scope>
    <source>
        <strain>C57BL/6J</strain>
        <tissue>Brain</tissue>
    </source>
</reference>
<reference key="4">
    <citation type="journal article" date="2009" name="PLoS Biol.">
        <title>Lineage-specific biology revealed by a finished genome assembly of the mouse.</title>
        <authorList>
            <person name="Church D.M."/>
            <person name="Goodstadt L."/>
            <person name="Hillier L.W."/>
            <person name="Zody M.C."/>
            <person name="Goldstein S."/>
            <person name="She X."/>
            <person name="Bult C.J."/>
            <person name="Agarwala R."/>
            <person name="Cherry J.L."/>
            <person name="DiCuccio M."/>
            <person name="Hlavina W."/>
            <person name="Kapustin Y."/>
            <person name="Meric P."/>
            <person name="Maglott D."/>
            <person name="Birtle Z."/>
            <person name="Marques A.C."/>
            <person name="Graves T."/>
            <person name="Zhou S."/>
            <person name="Teague B."/>
            <person name="Potamousis K."/>
            <person name="Churas C."/>
            <person name="Place M."/>
            <person name="Herschleb J."/>
            <person name="Runnheim R."/>
            <person name="Forrest D."/>
            <person name="Amos-Landgraf J."/>
            <person name="Schwartz D.C."/>
            <person name="Cheng Z."/>
            <person name="Lindblad-Toh K."/>
            <person name="Eichler E.E."/>
            <person name="Ponting C.P."/>
        </authorList>
    </citation>
    <scope>NUCLEOTIDE SEQUENCE [LARGE SCALE GENOMIC DNA]</scope>
    <source>
        <strain>C57BL/6J</strain>
    </source>
</reference>
<reference key="5">
    <citation type="journal article" date="2004" name="Genome Res.">
        <title>The status, quality, and expansion of the NIH full-length cDNA project: the Mammalian Gene Collection (MGC).</title>
        <authorList>
            <consortium name="The MGC Project Team"/>
        </authorList>
    </citation>
    <scope>NUCLEOTIDE SEQUENCE [LARGE SCALE MRNA] (ISOFORM 2)</scope>
    <source>
        <strain>C57BL/6J</strain>
        <tissue>Brain</tissue>
    </source>
</reference>
<reference key="6">
    <citation type="journal article" date="1999" name="Genome Res.">
        <title>An efficient DNA sequencing strategy based on bacteriophage Mu in vitro DNA transposition reaction.</title>
        <authorList>
            <person name="Haapa S."/>
            <person name="Suomalainen S."/>
            <person name="Eerikaeinen S."/>
            <person name="Airaksinen M."/>
            <person name="Paulin L."/>
            <person name="Savilahti H."/>
        </authorList>
    </citation>
    <scope>NUCLEOTIDE SEQUENCE [GENOMIC DNA] OF 1-227 (ISOFORM 2)</scope>
</reference>
<reference key="7">
    <citation type="journal article" date="2007" name="J. Biol. Chem.">
        <title>A novel N-terminal isoform of the neuron-specific K-Cl cotransporter KCC2.</title>
        <authorList>
            <person name="Uvarov P."/>
            <person name="Ludwig A."/>
            <person name="Markkanen M."/>
            <person name="Pruunsild P."/>
            <person name="Kaila K."/>
            <person name="Delpire E."/>
            <person name="Timmusk T."/>
            <person name="Rivera C."/>
            <person name="Airaksinen M.S."/>
        </authorList>
    </citation>
    <scope>NUCLEOTIDE SEQUENCE [GENOMIC DNA] OF 1-72 (ISOFORM 1)</scope>
    <scope>TISSUE SPECIFICITY</scope>
    <scope>DISRUPTION PHENOTYPE</scope>
</reference>
<reference key="8">
    <citation type="submission" date="2007-04" db="UniProtKB">
        <authorList>
            <person name="Lubec G."/>
            <person name="Kang S.U."/>
        </authorList>
    </citation>
    <scope>PROTEIN SEQUENCE OF 532-538; 726-747; 813-819; 833-843; 952-961; 1042-1052; 1078-1085 AND 1091-1101</scope>
    <scope>IDENTIFICATION BY MASS SPECTROMETRY</scope>
    <source>
        <strain>C57BL/6J</strain>
        <tissue>Brain</tissue>
    </source>
</reference>
<reference key="9">
    <citation type="journal article" date="2001" name="Neuron">
        <title>Disruption of KCC2 reveals an essential role of K-Cl cotransport already in early synaptic inhibition.</title>
        <authorList>
            <person name="Huebner C.A."/>
            <person name="Stein V."/>
            <person name="Hermans-Borgmeyer I."/>
            <person name="Meyer T."/>
            <person name="Ballanyi K."/>
            <person name="Jentsch T.J."/>
        </authorList>
    </citation>
    <scope>SUBCELLULAR LOCATION</scope>
</reference>
<reference key="10">
    <citation type="journal article" date="2008" name="Cell. Signal.">
        <title>Identification of a novel di-leucine motif mediating K(+)/Cl(-) cotransporter KCC2 constitutive endocytosis.</title>
        <authorList>
            <person name="Zhao B."/>
            <person name="Wong A.Y.C."/>
            <person name="Murshid A."/>
            <person name="Bowie D."/>
            <person name="Presley J.F."/>
            <person name="Bedford F.K."/>
        </authorList>
    </citation>
    <scope>INTERACTION WITH AP2A1</scope>
    <scope>MUTAGENESIS OF 680-LEU-LEU-681 AND 684-GLU-GLU-685</scope>
</reference>
<reference key="11">
    <citation type="journal article" date="2009" name="Cell">
        <title>Sites of regulated phosphorylation that control K-Cl cotransporter activity.</title>
        <authorList>
            <person name="Rinehart J."/>
            <person name="Maksimova Y.D."/>
            <person name="Tanis J.E."/>
            <person name="Stone K.L."/>
            <person name="Hodson C.A."/>
            <person name="Zhang J."/>
            <person name="Risinger M."/>
            <person name="Pan W."/>
            <person name="Wu D."/>
            <person name="Colangelo C.M."/>
            <person name="Forbush B."/>
            <person name="Joiner C.H."/>
            <person name="Gulcicek E.E."/>
            <person name="Gallagher P.G."/>
            <person name="Lifton R.P."/>
        </authorList>
    </citation>
    <scope>ACTIVITY REGULATION</scope>
    <scope>PHOSPHORYLATION AT THR-929 AND THR-1029</scope>
</reference>
<reference key="12">
    <citation type="journal article" date="2010" name="Cell">
        <title>A tissue-specific atlas of mouse protein phosphorylation and expression.</title>
        <authorList>
            <person name="Huttlin E.L."/>
            <person name="Jedrychowski M.P."/>
            <person name="Elias J.E."/>
            <person name="Goswami T."/>
            <person name="Rad R."/>
            <person name="Beausoleil S.A."/>
            <person name="Villen J."/>
            <person name="Haas W."/>
            <person name="Sowa M.E."/>
            <person name="Gygi S.P."/>
        </authorList>
    </citation>
    <scope>PHOSPHORYLATION [LARGE SCALE ANALYSIS] AT SER-1044; SER-1047 AND SER-1048</scope>
    <scope>IDENTIFICATION BY MASS SPECTROMETRY [LARGE SCALE ANALYSIS]</scope>
    <source>
        <tissue>Brain</tissue>
    </source>
</reference>
<reference evidence="17" key="13">
    <citation type="journal article" date="2021" name="Commun. Biol.">
        <title>The structural basis of function and regulation of neuronal cotransporters NKCC1 and KCC2.</title>
        <authorList>
            <person name="Zhang S."/>
            <person name="Zhou J."/>
            <person name="Zhang Y."/>
            <person name="Liu T."/>
            <person name="Friedel P."/>
            <person name="Zhuo W."/>
            <person name="Somasekharan S."/>
            <person name="Roy K."/>
            <person name="Zhang L."/>
            <person name="Liu Y."/>
            <person name="Meng X."/>
            <person name="Deng H."/>
            <person name="Zeng W."/>
            <person name="Li G."/>
            <person name="Forbush B."/>
            <person name="Yang M."/>
        </authorList>
    </citation>
    <scope>STRUCTURE BY ELECTRON MICROSCOPY (3.80 ANGSTROMS)</scope>
    <scope>SUBUNIT</scope>
</reference>
<protein>
    <recommendedName>
        <fullName>Solute carrier family 12 member 5</fullName>
    </recommendedName>
    <alternativeName>
        <fullName>Electroneutral potassium-chloride cotransporter 2</fullName>
    </alternativeName>
    <alternativeName>
        <fullName>K-Cl cotransporter 2</fullName>
        <shortName evidence="15">mKCC2</shortName>
    </alternativeName>
    <alternativeName>
        <fullName>Neuronal K-Cl cotransporter</fullName>
    </alternativeName>
</protein>
<dbReference type="EMBL" id="AF332063">
    <property type="protein sequence ID" value="AAK56092.1"/>
    <property type="molecule type" value="mRNA"/>
</dbReference>
<dbReference type="EMBL" id="AF332064">
    <property type="protein sequence ID" value="AAK56093.1"/>
    <property type="molecule type" value="mRNA"/>
</dbReference>
<dbReference type="EMBL" id="AK122460">
    <property type="protein sequence ID" value="BAC65742.1"/>
    <property type="status" value="ALT_INIT"/>
    <property type="molecule type" value="mRNA"/>
</dbReference>
<dbReference type="EMBL" id="AK147262">
    <property type="protein sequence ID" value="BAE27805.1"/>
    <property type="molecule type" value="mRNA"/>
</dbReference>
<dbReference type="EMBL" id="AL591495">
    <property type="status" value="NOT_ANNOTATED_CDS"/>
    <property type="molecule type" value="Genomic_DNA"/>
</dbReference>
<dbReference type="EMBL" id="BC054808">
    <property type="protein sequence ID" value="AAH54808.1"/>
    <property type="molecule type" value="mRNA"/>
</dbReference>
<dbReference type="EMBL" id="AJ011033">
    <property type="protein sequence ID" value="CAA09464.1"/>
    <property type="molecule type" value="Genomic_DNA"/>
</dbReference>
<dbReference type="CCDS" id="CCDS38332.1">
    <molecule id="Q91V14-2"/>
</dbReference>
<dbReference type="CCDS" id="CCDS89581.1">
    <molecule id="Q91V14-1"/>
</dbReference>
<dbReference type="RefSeq" id="NP_001342409.1">
    <molecule id="Q91V14-1"/>
    <property type="nucleotide sequence ID" value="NM_001355480.1"/>
</dbReference>
<dbReference type="RefSeq" id="NP_065066.2">
    <molecule id="Q91V14-2"/>
    <property type="nucleotide sequence ID" value="NM_020333.2"/>
</dbReference>
<dbReference type="RefSeq" id="XP_006500006.2">
    <property type="nucleotide sequence ID" value="XM_006499943.3"/>
</dbReference>
<dbReference type="PDB" id="7D14">
    <property type="method" value="EM"/>
    <property type="resolution" value="3.80 A"/>
    <property type="chains" value="A/B=1-1138"/>
</dbReference>
<dbReference type="PDBsum" id="7D14"/>
<dbReference type="EMDB" id="EMD-30543"/>
<dbReference type="SMR" id="Q91V14"/>
<dbReference type="BioGRID" id="208213">
    <property type="interactions" value="14"/>
</dbReference>
<dbReference type="FunCoup" id="Q91V14">
    <property type="interactions" value="1059"/>
</dbReference>
<dbReference type="IntAct" id="Q91V14">
    <property type="interactions" value="6"/>
</dbReference>
<dbReference type="MINT" id="Q91V14"/>
<dbReference type="STRING" id="10090.ENSMUSP00000096690"/>
<dbReference type="DrugBank" id="DB01216">
    <property type="generic name" value="Finasteride"/>
</dbReference>
<dbReference type="GlyConnect" id="2730">
    <property type="glycosylation" value="5 N-Linked glycans (3 sites)"/>
</dbReference>
<dbReference type="GlyCosmos" id="Q91V14">
    <property type="glycosylation" value="5 sites, 5 glycans"/>
</dbReference>
<dbReference type="GlyGen" id="Q91V14">
    <property type="glycosylation" value="9 sites, 13 N-linked glycans (8 sites), 1 O-linked glycan (1 site)"/>
</dbReference>
<dbReference type="iPTMnet" id="Q91V14"/>
<dbReference type="PhosphoSitePlus" id="Q91V14"/>
<dbReference type="SwissPalm" id="Q91V14"/>
<dbReference type="PaxDb" id="10090-ENSMUSP00000096690"/>
<dbReference type="PeptideAtlas" id="Q91V14"/>
<dbReference type="ProteomicsDB" id="253339">
    <molecule id="Q91V14-1"/>
</dbReference>
<dbReference type="ProteomicsDB" id="253340">
    <molecule id="Q91V14-2"/>
</dbReference>
<dbReference type="ABCD" id="Q91V14">
    <property type="antibodies" value="1 sequenced antibody"/>
</dbReference>
<dbReference type="Antibodypedia" id="1580">
    <property type="antibodies" value="321 antibodies from 29 providers"/>
</dbReference>
<dbReference type="DNASU" id="57138"/>
<dbReference type="Ensembl" id="ENSMUST00000099092.8">
    <molecule id="Q91V14-2"/>
    <property type="protein sequence ID" value="ENSMUSP00000096690.5"/>
    <property type="gene ID" value="ENSMUSG00000017740.18"/>
</dbReference>
<dbReference type="Ensembl" id="ENSMUST00000202623.4">
    <molecule id="Q91V14-1"/>
    <property type="protein sequence ID" value="ENSMUSP00000144623.2"/>
    <property type="gene ID" value="ENSMUSG00000017740.18"/>
</dbReference>
<dbReference type="GeneID" id="57138"/>
<dbReference type="KEGG" id="mmu:57138"/>
<dbReference type="UCSC" id="uc056zqu.1">
    <molecule id="Q91V14-1"/>
    <property type="organism name" value="mouse"/>
</dbReference>
<dbReference type="AGR" id="MGI:1862037"/>
<dbReference type="CTD" id="57468"/>
<dbReference type="MGI" id="MGI:1862037">
    <property type="gene designation" value="Slc12a5"/>
</dbReference>
<dbReference type="VEuPathDB" id="HostDB:ENSMUSG00000017740"/>
<dbReference type="eggNOG" id="KOG2082">
    <property type="taxonomic scope" value="Eukaryota"/>
</dbReference>
<dbReference type="GeneTree" id="ENSGT00940000160827"/>
<dbReference type="HOGENOM" id="CLU_001883_1_2_1"/>
<dbReference type="InParanoid" id="Q91V14"/>
<dbReference type="OMA" id="LRIDAMI"/>
<dbReference type="OrthoDB" id="2020542at2759"/>
<dbReference type="PhylomeDB" id="Q91V14"/>
<dbReference type="TreeFam" id="TF313657"/>
<dbReference type="Reactome" id="R-MMU-426117">
    <property type="pathway name" value="Cation-coupled Chloride cotransporters"/>
</dbReference>
<dbReference type="BioGRID-ORCS" id="57138">
    <property type="hits" value="2 hits in 80 CRISPR screens"/>
</dbReference>
<dbReference type="CD-CODE" id="CE726F99">
    <property type="entry name" value="Postsynaptic density"/>
</dbReference>
<dbReference type="ChiTaRS" id="Slc12a5">
    <property type="organism name" value="mouse"/>
</dbReference>
<dbReference type="PRO" id="PR:Q91V14"/>
<dbReference type="Proteomes" id="UP000000589">
    <property type="component" value="Chromosome 2"/>
</dbReference>
<dbReference type="RNAct" id="Q91V14">
    <property type="molecule type" value="protein"/>
</dbReference>
<dbReference type="Bgee" id="ENSMUSG00000017740">
    <property type="expression patterns" value="Expressed in retrosplenial region and 190 other cell types or tissues"/>
</dbReference>
<dbReference type="ExpressionAtlas" id="Q91V14">
    <property type="expression patterns" value="baseline and differential"/>
</dbReference>
<dbReference type="GO" id="GO:0071944">
    <property type="term" value="C:cell periphery"/>
    <property type="evidence" value="ECO:0000314"/>
    <property type="project" value="ARUK-UCL"/>
</dbReference>
<dbReference type="GO" id="GO:0032590">
    <property type="term" value="C:dendrite membrane"/>
    <property type="evidence" value="ECO:0007669"/>
    <property type="project" value="Ensembl"/>
</dbReference>
<dbReference type="GO" id="GO:0043198">
    <property type="term" value="C:dendritic shaft"/>
    <property type="evidence" value="ECO:0000314"/>
    <property type="project" value="MGI"/>
</dbReference>
<dbReference type="GO" id="GO:0098978">
    <property type="term" value="C:glutamatergic synapse"/>
    <property type="evidence" value="ECO:0007669"/>
    <property type="project" value="Ensembl"/>
</dbReference>
<dbReference type="GO" id="GO:0016020">
    <property type="term" value="C:membrane"/>
    <property type="evidence" value="ECO:0000250"/>
    <property type="project" value="UniProtKB"/>
</dbReference>
<dbReference type="GO" id="GO:0043025">
    <property type="term" value="C:neuronal cell body"/>
    <property type="evidence" value="ECO:0000314"/>
    <property type="project" value="ARUK-UCL"/>
</dbReference>
<dbReference type="GO" id="GO:0043204">
    <property type="term" value="C:perikaryon"/>
    <property type="evidence" value="ECO:0007669"/>
    <property type="project" value="Ensembl"/>
</dbReference>
<dbReference type="GO" id="GO:0005886">
    <property type="term" value="C:plasma membrane"/>
    <property type="evidence" value="ECO:0000314"/>
    <property type="project" value="MGI"/>
</dbReference>
<dbReference type="GO" id="GO:0099634">
    <property type="term" value="C:postsynaptic specialization membrane"/>
    <property type="evidence" value="ECO:0000314"/>
    <property type="project" value="SynGO"/>
</dbReference>
<dbReference type="GO" id="GO:0008519">
    <property type="term" value="F:ammonium channel activity"/>
    <property type="evidence" value="ECO:0007669"/>
    <property type="project" value="Ensembl"/>
</dbReference>
<dbReference type="GO" id="GO:0046872">
    <property type="term" value="F:metal ion binding"/>
    <property type="evidence" value="ECO:0007669"/>
    <property type="project" value="UniProtKB-KW"/>
</dbReference>
<dbReference type="GO" id="GO:0015379">
    <property type="term" value="F:potassium:chloride symporter activity"/>
    <property type="evidence" value="ECO:0000315"/>
    <property type="project" value="MGI"/>
</dbReference>
<dbReference type="GO" id="GO:0007268">
    <property type="term" value="P:chemical synaptic transmission"/>
    <property type="evidence" value="ECO:0000315"/>
    <property type="project" value="MGI"/>
</dbReference>
<dbReference type="GO" id="GO:0006821">
    <property type="term" value="P:chloride transport"/>
    <property type="evidence" value="ECO:0000315"/>
    <property type="project" value="MGI"/>
</dbReference>
<dbReference type="GO" id="GO:0060996">
    <property type="term" value="P:dendritic spine development"/>
    <property type="evidence" value="ECO:0007669"/>
    <property type="project" value="Ensembl"/>
</dbReference>
<dbReference type="GO" id="GO:0006971">
    <property type="term" value="P:hypotonic response"/>
    <property type="evidence" value="ECO:0000250"/>
    <property type="project" value="UniProtKB"/>
</dbReference>
<dbReference type="GO" id="GO:0030644">
    <property type="term" value="P:intracellular chloride ion homeostasis"/>
    <property type="evidence" value="ECO:0007669"/>
    <property type="project" value="Ensembl"/>
</dbReference>
<dbReference type="GO" id="GO:0051452">
    <property type="term" value="P:intracellular pH reduction"/>
    <property type="evidence" value="ECO:0007669"/>
    <property type="project" value="Ensembl"/>
</dbReference>
<dbReference type="GO" id="GO:0007612">
    <property type="term" value="P:learning"/>
    <property type="evidence" value="ECO:0000315"/>
    <property type="project" value="MGI"/>
</dbReference>
<dbReference type="GO" id="GO:0006811">
    <property type="term" value="P:monoatomic ion transport"/>
    <property type="evidence" value="ECO:0000250"/>
    <property type="project" value="UniProtKB"/>
</dbReference>
<dbReference type="GO" id="GO:0035264">
    <property type="term" value="P:multicellular organism growth"/>
    <property type="evidence" value="ECO:0000315"/>
    <property type="project" value="MGI"/>
</dbReference>
<dbReference type="GO" id="GO:0098970">
    <property type="term" value="P:postsynaptic neurotransmitter receptor diffusion trapping"/>
    <property type="evidence" value="ECO:0007669"/>
    <property type="project" value="Ensembl"/>
</dbReference>
<dbReference type="GO" id="GO:0071805">
    <property type="term" value="P:potassium ion transmembrane transport"/>
    <property type="evidence" value="ECO:0000250"/>
    <property type="project" value="UniProtKB"/>
</dbReference>
<dbReference type="GO" id="GO:0150052">
    <property type="term" value="P:regulation of postsynapse assembly"/>
    <property type="evidence" value="ECO:0007669"/>
    <property type="project" value="Ensembl"/>
</dbReference>
<dbReference type="GO" id="GO:0009410">
    <property type="term" value="P:response to xenobiotic stimulus"/>
    <property type="evidence" value="ECO:0000315"/>
    <property type="project" value="MGI"/>
</dbReference>
<dbReference type="GO" id="GO:0040040">
    <property type="term" value="P:thermosensory behavior"/>
    <property type="evidence" value="ECO:0000315"/>
    <property type="project" value="MGI"/>
</dbReference>
<dbReference type="FunFam" id="1.20.1740.10:FF:000040">
    <property type="entry name" value="Solute carrier family 12 member 6"/>
    <property type="match status" value="1"/>
</dbReference>
<dbReference type="FunFam" id="1.20.1740.10:FF:000123">
    <property type="entry name" value="Uncharacterized protein"/>
    <property type="match status" value="1"/>
</dbReference>
<dbReference type="Gene3D" id="1.20.1740.10">
    <property type="entry name" value="Amino acid/polyamine transporter I"/>
    <property type="match status" value="1"/>
</dbReference>
<dbReference type="InterPro" id="IPR004841">
    <property type="entry name" value="AA-permease/SLC12A_dom"/>
</dbReference>
<dbReference type="InterPro" id="IPR000076">
    <property type="entry name" value="KCL_cotranspt"/>
</dbReference>
<dbReference type="InterPro" id="IPR018491">
    <property type="entry name" value="SLC12_C"/>
</dbReference>
<dbReference type="InterPro" id="IPR004842">
    <property type="entry name" value="SLC12A_fam"/>
</dbReference>
<dbReference type="NCBIfam" id="TIGR00930">
    <property type="entry name" value="2a30"/>
    <property type="match status" value="1"/>
</dbReference>
<dbReference type="PANTHER" id="PTHR11827:SF54">
    <property type="entry name" value="SOLUTE CARRIER FAMILY 12 MEMBER 5"/>
    <property type="match status" value="1"/>
</dbReference>
<dbReference type="PANTHER" id="PTHR11827">
    <property type="entry name" value="SOLUTE CARRIER FAMILY 12, CATION COTRANSPORTERS"/>
    <property type="match status" value="1"/>
</dbReference>
<dbReference type="Pfam" id="PF00324">
    <property type="entry name" value="AA_permease"/>
    <property type="match status" value="2"/>
</dbReference>
<dbReference type="Pfam" id="PF03522">
    <property type="entry name" value="SLC12"/>
    <property type="match status" value="3"/>
</dbReference>
<dbReference type="PRINTS" id="PR01081">
    <property type="entry name" value="KCLTRNSPORT"/>
</dbReference>
<accession>Q91V14</accession>
<accession>A2A5L0</accession>
<accession>Q3UHQ2</accession>
<accession>Q7TQC9</accession>
<accession>Q80TI5</accession>
<accession>Q9Z0M7</accession>
<keyword id="KW-0002">3D-structure</keyword>
<keyword id="KW-0025">Alternative splicing</keyword>
<keyword id="KW-1003">Cell membrane</keyword>
<keyword id="KW-0966">Cell projection</keyword>
<keyword id="KW-0868">Chloride</keyword>
<keyword id="KW-0903">Direct protein sequencing</keyword>
<keyword id="KW-1015">Disulfide bond</keyword>
<keyword id="KW-0325">Glycoprotein</keyword>
<keyword id="KW-0406">Ion transport</keyword>
<keyword id="KW-0472">Membrane</keyword>
<keyword id="KW-0479">Metal-binding</keyword>
<keyword id="KW-0597">Phosphoprotein</keyword>
<keyword id="KW-0630">Potassium</keyword>
<keyword id="KW-0633">Potassium transport</keyword>
<keyword id="KW-1185">Reference proteome</keyword>
<keyword id="KW-0769">Symport</keyword>
<keyword id="KW-0812">Transmembrane</keyword>
<keyword id="KW-1133">Transmembrane helix</keyword>
<keyword id="KW-0813">Transport</keyword>
<organism>
    <name type="scientific">Mus musculus</name>
    <name type="common">Mouse</name>
    <dbReference type="NCBI Taxonomy" id="10090"/>
    <lineage>
        <taxon>Eukaryota</taxon>
        <taxon>Metazoa</taxon>
        <taxon>Chordata</taxon>
        <taxon>Craniata</taxon>
        <taxon>Vertebrata</taxon>
        <taxon>Euteleostomi</taxon>
        <taxon>Mammalia</taxon>
        <taxon>Eutheria</taxon>
        <taxon>Euarchontoglires</taxon>
        <taxon>Glires</taxon>
        <taxon>Rodentia</taxon>
        <taxon>Myomorpha</taxon>
        <taxon>Muroidea</taxon>
        <taxon>Muridae</taxon>
        <taxon>Murinae</taxon>
        <taxon>Mus</taxon>
        <taxon>Mus</taxon>
    </lineage>
</organism>
<gene>
    <name type="primary">Slc12a5</name>
    <name evidence="15" type="synonym">Kcc2</name>
    <name type="synonym">Kiaa1176</name>
</gene>
<comment type="function">
    <text evidence="1 2">Mediates electroneutral potassium-chloride cotransport in mature neurons and is required for neuronal Cl(-) homeostasis (By similarity). As major extruder of intracellular chloride, it establishes the low neuronal Cl(-) levels required for chloride influx after binding of GABA-A and glycine to their receptors, with subsequent hyperpolarization and neuronal inhibition (By similarity). Involved in the regulation of dendritic spine formation and maturation (By similarity).</text>
</comment>
<comment type="catalytic activity">
    <reaction evidence="2">
        <text>K(+)(in) + chloride(in) = K(+)(out) + chloride(out)</text>
        <dbReference type="Rhea" id="RHEA:72427"/>
        <dbReference type="ChEBI" id="CHEBI:17996"/>
        <dbReference type="ChEBI" id="CHEBI:29103"/>
    </reaction>
</comment>
<comment type="activity regulation">
    <text evidence="9">Inhibited following phosphorylation by OXSR1/OSR1 and STK39/SPAK: phosphorylation takes place downstream of WNK kinases (WNK1, WNK2, WNK3 or WNK4) in response to hyperosmotic stress and subsequent cell shrinkage.</text>
</comment>
<comment type="subunit">
    <text evidence="2 8 10">Homodimer; adopts a domain-swap conformation at the scissor helices connecting the transmembrane domain and C-terminal domain (PubMed:33597714). Heterodimer with K-Cl cotransporters SLC12A6 and SLC12A7 (By similarity). Interacts with AP2A1 (PubMed:18625303).</text>
</comment>
<comment type="subcellular location">
    <subcellularLocation>
        <location evidence="6">Cell membrane</location>
        <topology evidence="6 10">Multi-pass membrane protein</topology>
    </subcellularLocation>
    <subcellularLocation>
        <location evidence="6">Cell projection</location>
        <location evidence="6">Dendrite</location>
    </subcellularLocation>
    <text evidence="6">Detected on dendrites, but not on axons of spinal cord neurons and at GPHN-positive inhibitory synapses.</text>
</comment>
<comment type="alternative products">
    <event type="alternative splicing"/>
    <isoform>
        <id>Q91V14-1</id>
        <name>1</name>
        <name>KCC2a</name>
        <sequence type="displayed"/>
    </isoform>
    <isoform>
        <id>Q91V14-2</id>
        <name>2</name>
        <name>KCC2b</name>
        <sequence type="described" ref="VSP_029910"/>
    </isoform>
</comment>
<comment type="tissue specificity">
    <molecule>Isoform 1</molecule>
    <text evidence="7">Expressed in brainstem, spinal cord and olfactory bulb of 17 dpc embryos. Expressed in all parts of the brain and spinal cord in postnatal day 14 mice.</text>
</comment>
<comment type="tissue specificity">
    <molecule>Isoform 2</molecule>
    <text evidence="7">Expressed in brainstem and spinal cord of 17 dpc embryos. Expressed in all parts of the brain and spinal cord in postnatal day 14 mice.</text>
</comment>
<comment type="developmental stage">
    <molecule>Isoform 1</molecule>
    <text evidence="7">Predominant isoform in 17 dpc brain.</text>
</comment>
<comment type="developmental stage">
    <molecule>Isoform 2</molecule>
    <text evidence="7">Predominant isoform during postnatal development. Detected in the ventral horns of the spinal cord at 12.5 dpc, and throughout the spinal cord at birth.</text>
</comment>
<comment type="PTM">
    <text evidence="9">Phosphorylated at Thr-929 and Thr-1029 by OXSR1/OSR1 and STK39/SPAK downstream of WNK kinases (WNK1, WNK2, WNK3 or WNK4), inhibiting the potassium-chloride cotransport activity.</text>
</comment>
<comment type="disruption phenotype">
    <text evidence="6">Death at birth due to severe motor deficits including respiratory failure.</text>
</comment>
<comment type="disruption phenotype">
    <molecule>Isoform 2</molecule>
    <text evidence="7">Mice lacking isoform 2 die within 2 weeks after birth.</text>
</comment>
<comment type="similarity">
    <text evidence="16">Belongs to the SLC12A transporter family. K/Cl co-transporter subfamily.</text>
</comment>
<comment type="sequence caution" evidence="16">
    <conflict type="erroneous initiation">
        <sequence resource="EMBL-CDS" id="BAC65742"/>
    </conflict>
    <text>Truncated N-terminus.</text>
</comment>
<feature type="chain" id="PRO_0000178035" description="Solute carrier family 12 member 5">
    <location>
        <begin position="1"/>
        <end position="1138"/>
    </location>
</feature>
<feature type="topological domain" description="Cytoplasmic" evidence="16">
    <location>
        <begin position="1"/>
        <end position="98"/>
    </location>
</feature>
<feature type="transmembrane region" description="Discontinuously helical; Name=1" evidence="2">
    <location>
        <begin position="99"/>
        <end position="120"/>
    </location>
</feature>
<feature type="topological domain" description="Extracellular" evidence="16">
    <location>
        <begin position="121"/>
        <end position="129"/>
    </location>
</feature>
<feature type="transmembrane region" description="Helical; Name=2" evidence="2">
    <location>
        <begin position="130"/>
        <end position="151"/>
    </location>
</feature>
<feature type="topological domain" description="Cytoplasmic" evidence="16">
    <location>
        <begin position="152"/>
        <end position="174"/>
    </location>
</feature>
<feature type="transmembrane region" description="Helical; Name=3" evidence="2">
    <location>
        <begin position="175"/>
        <end position="203"/>
    </location>
</feature>
<feature type="topological domain" description="Extracellular" evidence="16">
    <location>
        <begin position="204"/>
        <end position="229"/>
    </location>
</feature>
<feature type="transmembrane region" description="Helical; Name=4" evidence="2">
    <location>
        <begin position="230"/>
        <end position="250"/>
    </location>
</feature>
<feature type="transmembrane region" description="Helical; Name=5" evidence="2">
    <location>
        <begin position="251"/>
        <end position="276"/>
    </location>
</feature>
<feature type="topological domain" description="Extracellular" evidence="16">
    <location>
        <begin position="277"/>
        <end position="402"/>
    </location>
</feature>
<feature type="transmembrane region" description="Helical; Name=6" evidence="2">
    <location>
        <begin position="403"/>
        <end position="420"/>
    </location>
</feature>
<feature type="topological domain" description="Cytoplasmic" evidence="16">
    <location>
        <begin position="421"/>
        <end position="429"/>
    </location>
</feature>
<feature type="transmembrane region" description="Helical; Name=7" evidence="2">
    <location>
        <begin position="430"/>
        <end position="453"/>
    </location>
</feature>
<feature type="topological domain" description="Extracellular" evidence="16">
    <location>
        <begin position="454"/>
        <end position="485"/>
    </location>
</feature>
<feature type="transmembrane region" description="Helical; Name=8" evidence="2">
    <location>
        <begin position="486"/>
        <end position="513"/>
    </location>
</feature>
<feature type="topological domain" description="Cytoplasmic" evidence="16">
    <location>
        <begin position="514"/>
        <end position="534"/>
    </location>
</feature>
<feature type="transmembrane region" description="Helical; Name=9" evidence="2">
    <location>
        <begin position="535"/>
        <end position="555"/>
    </location>
</feature>
<feature type="transmembrane region" description="Helical; Name=10" evidence="2">
    <location>
        <begin position="556"/>
        <end position="578"/>
    </location>
</feature>
<feature type="topological domain" description="Cytoplasmic" evidence="16">
    <location>
        <begin position="579"/>
        <end position="592"/>
    </location>
</feature>
<feature type="transmembrane region" description="Helical; Name=11" evidence="2">
    <location>
        <begin position="593"/>
        <end position="615"/>
    </location>
</feature>
<feature type="transmembrane region" description="Helical; Name=12" evidence="2">
    <location>
        <begin position="616"/>
        <end position="632"/>
    </location>
</feature>
<feature type="topological domain" description="Cytoplasmic" evidence="16">
    <location>
        <begin position="633"/>
        <end position="1138"/>
    </location>
</feature>
<feature type="region of interest" description="Disordered" evidence="5">
    <location>
        <begin position="1"/>
        <end position="62"/>
    </location>
</feature>
<feature type="region of interest" description="Disordered" evidence="5">
    <location>
        <begin position="96"/>
        <end position="116"/>
    </location>
</feature>
<feature type="region of interest" description="Scissor helix" evidence="2">
    <location>
        <begin position="667"/>
        <end position="681"/>
    </location>
</feature>
<feature type="region of interest" description="Disordered" evidence="5">
    <location>
        <begin position="943"/>
        <end position="1051"/>
    </location>
</feature>
<feature type="compositionally biased region" description="Basic and acidic residues" evidence="5">
    <location>
        <begin position="21"/>
        <end position="45"/>
    </location>
</feature>
<feature type="compositionally biased region" description="Polar residues" evidence="5">
    <location>
        <begin position="46"/>
        <end position="55"/>
    </location>
</feature>
<feature type="compositionally biased region" description="Basic and acidic residues" evidence="5">
    <location>
        <begin position="98"/>
        <end position="111"/>
    </location>
</feature>
<feature type="compositionally biased region" description="Basic and acidic residues" evidence="5">
    <location>
        <begin position="945"/>
        <end position="962"/>
    </location>
</feature>
<feature type="compositionally biased region" description="Acidic residues" evidence="5">
    <location>
        <begin position="982"/>
        <end position="994"/>
    </location>
</feature>
<feature type="compositionally biased region" description="Low complexity" evidence="5">
    <location>
        <begin position="1001"/>
        <end position="1012"/>
    </location>
</feature>
<feature type="compositionally biased region" description="Basic and acidic residues" evidence="5">
    <location>
        <begin position="1019"/>
        <end position="1041"/>
    </location>
</feature>
<feature type="binding site" evidence="2">
    <location>
        <position position="113"/>
    </location>
    <ligand>
        <name>K(+)</name>
        <dbReference type="ChEBI" id="CHEBI:29103"/>
    </ligand>
</feature>
<feature type="binding site" evidence="2">
    <location>
        <position position="184"/>
    </location>
    <ligand>
        <name>chloride</name>
        <dbReference type="ChEBI" id="CHEBI:17996"/>
    </ligand>
</feature>
<feature type="binding site" evidence="2">
    <location>
        <position position="410"/>
    </location>
    <ligand>
        <name>K(+)</name>
        <dbReference type="ChEBI" id="CHEBI:29103"/>
    </ligand>
</feature>
<feature type="binding site" evidence="2">
    <location>
        <position position="414"/>
    </location>
    <ligand>
        <name>chloride</name>
        <dbReference type="ChEBI" id="CHEBI:17996"/>
    </ligand>
</feature>
<feature type="binding site" evidence="2">
    <location>
        <position position="415"/>
    </location>
    <ligand>
        <name>chloride</name>
        <dbReference type="ChEBI" id="CHEBI:17996"/>
    </ligand>
</feature>
<feature type="binding site" evidence="2">
    <location>
        <position position="446"/>
    </location>
    <ligand>
        <name>K(+)</name>
        <dbReference type="ChEBI" id="CHEBI:29103"/>
    </ligand>
</feature>
<feature type="binding site" evidence="2">
    <location>
        <position position="569"/>
    </location>
    <ligand>
        <name>chloride</name>
        <dbReference type="ChEBI" id="CHEBI:17996"/>
    </ligand>
</feature>
<feature type="modified residue" description="Phosphothreonine" evidence="1">
    <location>
        <position position="57"/>
    </location>
</feature>
<feature type="modified residue" description="Phosphothreonine; by OXSR1 and STK39" evidence="9">
    <location>
        <position position="929"/>
    </location>
</feature>
<feature type="modified residue" description="Phosphothreonine; by OXSR1 and STK39" evidence="9">
    <location>
        <position position="1029"/>
    </location>
</feature>
<feature type="modified residue" description="Phosphoserine" evidence="18">
    <location>
        <position position="1044"/>
    </location>
</feature>
<feature type="modified residue" description="Phosphoserine" evidence="18">
    <location>
        <position position="1047"/>
    </location>
</feature>
<feature type="modified residue" description="Phosphoserine" evidence="18">
    <location>
        <position position="1048"/>
    </location>
</feature>
<feature type="glycosylation site" description="N-linked (GlcNAc...) asparagine" evidence="4">
    <location>
        <position position="314"/>
    </location>
</feature>
<feature type="glycosylation site" description="N-linked (GlcNAc...) asparagine" evidence="4">
    <location>
        <position position="333"/>
    </location>
</feature>
<feature type="glycosylation site" description="N-linked (GlcNAc...) asparagine" evidence="4">
    <location>
        <position position="351"/>
    </location>
</feature>
<feature type="glycosylation site" description="N-linked (GlcNAc...) asparagine" evidence="4">
    <location>
        <position position="362"/>
    </location>
</feature>
<feature type="disulfide bond" evidence="3">
    <location>
        <begin position="310"/>
        <end position="325"/>
    </location>
</feature>
<feature type="disulfide bond" evidence="3">
    <location>
        <begin position="345"/>
        <end position="354"/>
    </location>
</feature>
<feature type="splice variant" id="VSP_029910" description="In isoform 2." evidence="11 12 13 14">
    <original>MSRRFTVTSLPPAASAASADPESRRHSVADPRRLPREDVK</original>
    <variation>MLNNLTDCEDGDGGANP</variation>
    <location>
        <begin position="1"/>
        <end position="40"/>
    </location>
</feature>
<feature type="mutagenesis site" description="Inhibits endocytosis. Abolishes interaction with AP2A1." evidence="8">
    <original>LL</original>
    <variation>AA</variation>
    <location>
        <begin position="680"/>
        <end position="681"/>
    </location>
</feature>
<feature type="mutagenesis site" description="Decreases endocytosis." evidence="8">
    <original>EE</original>
    <variation>AA</variation>
    <location>
        <begin position="684"/>
        <end position="685"/>
    </location>
</feature>
<feature type="sequence conflict" description="In Ref. 5; AAH54808." evidence="16" ref="5">
    <location>
        <position position="64"/>
    </location>
</feature>
<feature type="sequence conflict" description="In Ref. 3; BAE27805." evidence="16" ref="3">
    <original>G</original>
    <variation>D</variation>
    <location>
        <position position="859"/>
    </location>
</feature>
<evidence type="ECO:0000250" key="1">
    <source>
        <dbReference type="UniProtKB" id="Q63633"/>
    </source>
</evidence>
<evidence type="ECO:0000250" key="2">
    <source>
        <dbReference type="UniProtKB" id="Q9H2X9"/>
    </source>
</evidence>
<evidence type="ECO:0000250" key="3">
    <source>
        <dbReference type="UniProtKB" id="Q9UP95"/>
    </source>
</evidence>
<evidence type="ECO:0000255" key="4"/>
<evidence type="ECO:0000256" key="5">
    <source>
        <dbReference type="SAM" id="MobiDB-lite"/>
    </source>
</evidence>
<evidence type="ECO:0000269" key="6">
    <source>
    </source>
</evidence>
<evidence type="ECO:0000269" key="7">
    <source>
    </source>
</evidence>
<evidence type="ECO:0000269" key="8">
    <source>
    </source>
</evidence>
<evidence type="ECO:0000269" key="9">
    <source>
    </source>
</evidence>
<evidence type="ECO:0000269" key="10">
    <source>
    </source>
</evidence>
<evidence type="ECO:0000303" key="11">
    <source>
    </source>
</evidence>
<evidence type="ECO:0000303" key="12">
    <source>
    </source>
</evidence>
<evidence type="ECO:0000303" key="13">
    <source>
    </source>
</evidence>
<evidence type="ECO:0000303" key="14">
    <source>
    </source>
</evidence>
<evidence type="ECO:0000303" key="15">
    <source>
    </source>
</evidence>
<evidence type="ECO:0000305" key="16"/>
<evidence type="ECO:0007744" key="17">
    <source>
        <dbReference type="PDB" id="7D14"/>
    </source>
</evidence>
<evidence type="ECO:0007744" key="18">
    <source>
    </source>
</evidence>
<proteinExistence type="evidence at protein level"/>
<sequence>MSRRFTVTSLPPAASAASADPESRRHSVADPRRLPREDVKGDGNPKESSPFINSTDTEKGREYDGRNMALFEEEMDTSPMVSSLLSGLANYTNLPQGSREHEEAENNEGGKKKPVQAPRMGTFMGVYLPCLQNIFGVILFLRLTWVVGIAGIMESFCMVFICCSCTMLTAISMSAIATNGVVPAGGSYYMISRSLGPEFGGAVGLCFYLGTTFAGAMYILGTIEILLAYLFPAMAIFKAEDASGEAAAMLNNMRVYGTCVLTCMATVVFVGVKYVNKFALVFLGCVILSILAIYAGVIKSAFDPPNFPICLLGNRTLSRHGFDVCAKLAWEGNETVTTRLWGLFCSSRLLNATCDEYFTRNNVTEIQGIPGAASGLIKENLWSSYLTKGVIVERRGMPSVGLADGTPVDMDHPYVFSDMTSYFTLLVGIYFPSVTGIMAGSNRSGDLRDAQKSIPTGTILAIATTSAVYISSVVLFGACIEGVVLRDKFGEAVNGNLVVGTLAWPSPWVIVIGSFFSTCGAGLQSLTGAPRLLQAISRDGIVPFLQVFGHGKANGEPTWALLLTACICEIGILIASLDEVAPILSMFFLMCYMFVNLACAVQTLLRTPNWRPRFRYYHWTLSFLGMSLCLALMFICSWYYALVAMLIAGLIYKYIEYRGAEKEWGDGIRGLSLSAARYALLRLEEGPPHTKNWRPQLLVLVRVDQDQNVVHPQLLSLTSQLKAGKGLTIVGSVLEGTFLDNHPQAQRAEESIRRLMEAEKVKGFCQVVISSNLRDGVSHLIQSGGLGGLQHNTVLVGWPRNWRQKEDHQTWRNFIELVRETTAGHLALLVTKNVSMFPGNPERFSEGSIDVWWIVHDGGMLMLLPFLLRHHKVWRKCKMRIFTVAQMDDNSIQMKKDLTTFLYHLRITAEVEVVEMHESDISAYTYEKTLVMEQRSQILKQMHLTKNEREREIQSITDESRGSIRRKNPANPRLRLNVPEETACDNEEKPEEEVQLIHDQSAPSCPSSSPSPGEEPEGERETDPEVHLTWTKDKSVAEKNKGPSPVSSEGIKDFFSMKPEWENLNQSNVRRMHTAVRLNEVIVNKSRDAKLVLLNMPGPPRNRNGDENYMEFLEVLTEQLDRVMLVRGGGREVITIYS</sequence>